<comment type="function">
    <text evidence="1">Component of the Mediator complex, a coactivator involved in regulated gene transcription of nearly all RNA polymerase II-dependent genes. Mediator functions as a bridge to convey information from gene-specific regulatory proteins to the basal RNA polymerase II transcription machinery. Mediator is recruited to promoters by direct interactions with regulatory proteins and serves as a scaffold for the assembly of a functional preinitiation complex with RNA polymerase II and the general transcription factors. This subunit may specifically regulate transcription of targets of the Wnt signaling pathway and SHH signaling pathways (By similarity).</text>
</comment>
<comment type="subunit">
    <text evidence="1">Component of the Mediator complex, which is composed of MED1, MED4, MED6, MED7, MED8, MED9, MED10, MED11, MED12, MED13, MED13L, MED14, MED15, MED16, MED17, MED18, MED19, MED20, MED21, MED22, MED23, MED24, MED25, MED26, MED27, MED29, MED30, MED31, CCNC, CDK8 and CDC2L6/CDK11. The MED12, MED13, CCNC and CDK8 subunits form a distinct module termed the CDK8 module. Mediator containing the CDK8 module is less active than Mediator lacking this module in supporting transcriptional activation. Individual preparations of the Mediator complex lacking one or more distinct subunits have been variously termed ARC, CRSP, DRIP, PC2, SMCC and TRAP. Also interacts with CTNNB1 and GLI3 (By similarity).</text>
</comment>
<comment type="subcellular location">
    <subcellularLocation>
        <location evidence="6">Nucleus</location>
    </subcellularLocation>
</comment>
<comment type="alternative products">
    <event type="alternative splicing"/>
    <isoform>
        <id>Q5RCU2-1</id>
        <name>1</name>
        <sequence type="displayed"/>
    </isoform>
    <isoform>
        <id>Q5RCU2-2</id>
        <name>2</name>
        <sequence type="described" ref="VSP_029981"/>
    </isoform>
</comment>
<comment type="similarity">
    <text evidence="6">Belongs to the Mediator complex subunit 12 family.</text>
</comment>
<comment type="sequence caution" evidence="6">
    <conflict type="frameshift">
        <sequence resource="EMBL-CDS" id="CAH90415"/>
    </conflict>
</comment>
<sequence>MAAFGILSYEHRPLKRPRLGPPDVYPQDPKQKEDELTALNVKQGFNNQPAVSGDEHGSAKNVSFNPAKISSNFSSIIAEKLRCNTLPDTGRRKPQVNQKDNFWLVTARSQSAINTWFTDLAGTKPLTQLAKKVPIFSKKEEVFGYLAKYTVPVMRAAWLIKMTCAYYAAISETKVKKRHVDPFMEWTQIITKYLWEQLQKMAEYYRPGPAGSGGCGSTIGPLPHDVEVAIRQWDYTEKLAMFMFQDGMLDRHEFLTWVLECFEKIRPGEDELLKLLLPLLLRYSGEFVQSAYLSRRLAYFCTRRLALQLDGVSSHSSHVISAQSTSTLPTTPAPQPPTSSTPSTPFSDLLMCPQHRPLVFGLSCILQTILLCCPSALVWHYSLTDSRIKTGSPLDHLPIAPSNLPMPEGNSAFTQQVRAKLREIEQQIKERGQAVEVRWSFDKCQEATAGFTIGRVLHTLEVLDSHSFERSDFSNSLDSLCNRIFGLGPSKDGHEISSDDDAVVSLLCEWAVSCKRSGRHRAMVVAKLLEKRQAEIEAERCGESEAADEKGSIASGSLSAPSAPIFQDVLLQFLDTQAPMLTDPRSESERVEFFNLVLLFCELIRHDVFSHNMYTCTLISRGDLAFGAPGPRPPSPFDDPADDPEHKEAEGSSSSKLEDPGLSESMDIDPSSSVLFEDMEKPDFSLFSPTMPCEGKGSPSPEKPDVEKEVKPPPKEKIEGTLGVLYDQPRHVQYATHFPIPQEESCSHECNQRLVVLFGVGKQRDDARHAIKKITKDILKVLNRKGTAETDQLAPIVPLNPGDLTFLGGEDGQKRRRNRPEAFPTAEDIFAKFQHLSHYDQHQVTAQVSRNVLEQITSFALGMSYHLPLVQHVQFIFDLMEYSLSISGLIDFAIQLLNELSVVEAELLLKSSDLVGSYTTSLCLCIVAVLRHYHACLILNQDQMAQVFEGLCGVVKHGMNRSDGSSAERCILAYLYDLYTSCSHLKNKFGELFSDFCSKVKNTIYCNVEPSESNMRWAPEFMIDTLENPAAHTFTYTGLGKSLSENPANRYSFVCNALMHVCVGHHDPDRVNDIAILCAELTGYCKSLSAEWLGVLKALCCSSNNGTCGFNDLLCNVDVSDLSFHDSLATFVAILIARQCLLLEDLIRCAAIPSLLNAACSEQDSEPGARLTCRILLHLFKTPQLNPCQSDGNKPTVGIRSSCDRHLLAASQNRIVDGAVFAVLKAVFVLGDAELKGSGFTVTGGTEELPEEEGGGGSGGRRQGGRNISVETASLDVYAKYVLRSICQQEWVGERCLKSLCEDSNDLQDPVLSSAQAQRLMQLICYPHRLLDNEDGENPQRQRIKRILQNLDQWTMRQSSLELQLMIKQTPNNEMNSLLENIAKATIEVFQQSAETGSSSGSTASNMPSSSKTKPVLSSLERSGVWLVAPLIAKLPTSVQGHVLKAAGEELEKGQHLGSSSRKERDRQKQKSMSLLSQQPFLSLVLTCLKGQDEQREGLLTSLYSQVHQIVNNWRDDQYLDDCKPKQLMHEALKLRLNLVGGMFDTVQRSTQQTTEWAMLLLEIIISGTVDMQSNNELFTTVLDMLSVLINGTLAADMSSISQGSMEENKRAYMNLAKKLQKELGERQSDSLEKVRQLLPLPKQTRDVITCEPQGSLIDTKGNKIAGFDSIFKKEGLQVSTKQKISPWDLFEGLKPSAPLSWGWFGTVRVDRRVARGEEQQRLLLYHTHLRPRPRAYYLEPLPLPPEDEEPPAPTLLEPEKKAPEPPKTDKPGAAPPSTEERKKKSTKGKKRSQPATKTEDYGMGPGRSGPYGVTVPPDLLHHPNPGSITHLNYRQGSIGLYTQNQPLPAGGPRVDPYRPVRLPMQKLPTRPTYPGVLPTTMTGVMGLEPSSYKTSVYRQQQPAVPQGQRLRQQLQAKIQSQGMLGQSSVHQMTPSSSYGLQTSQGYTPYVSHVGLQQHTGPAGTMVPPSYSSQPYQSTHPSTNPTLVDPTRHLQQRPSGYVHQQAPTYGHGLTSTQRFSHQTLQQTPMISTMTPMSAQGVQAGVRSTAILPEQQQQQQQQQQQQQQQQQQQQQQQQQQYHIRQQQQQQILRQQQQQQQQQQQQQQQQQQQQQQQQQQQHQQQQQQQAAPPQPQPQSQPQFQRQGLQQTQQQQQTAALVRQLQQQLSNTQPQPSTNIFGRY</sequence>
<evidence type="ECO:0000250" key="1"/>
<evidence type="ECO:0000250" key="2">
    <source>
        <dbReference type="UniProtKB" id="A2AGH6"/>
    </source>
</evidence>
<evidence type="ECO:0000250" key="3">
    <source>
        <dbReference type="UniProtKB" id="Q93074"/>
    </source>
</evidence>
<evidence type="ECO:0000256" key="4">
    <source>
        <dbReference type="SAM" id="MobiDB-lite"/>
    </source>
</evidence>
<evidence type="ECO:0000303" key="5">
    <source ref="1"/>
</evidence>
<evidence type="ECO:0000305" key="6"/>
<keyword id="KW-0007">Acetylation</keyword>
<keyword id="KW-0010">Activator</keyword>
<keyword id="KW-0025">Alternative splicing</keyword>
<keyword id="KW-0488">Methylation</keyword>
<keyword id="KW-0539">Nucleus</keyword>
<keyword id="KW-0597">Phosphoprotein</keyword>
<keyword id="KW-0678">Repressor</keyword>
<keyword id="KW-0804">Transcription</keyword>
<keyword id="KW-0805">Transcription regulation</keyword>
<accession>Q5RCU2</accession>
<accession>Q7YQK7</accession>
<reference key="1">
    <citation type="submission" date="2004-11" db="EMBL/GenBank/DDBJ databases">
        <authorList>
            <consortium name="The German cDNA consortium"/>
        </authorList>
    </citation>
    <scope>NUCLEOTIDE SEQUENCE [LARGE SCALE MRNA] (ISOFORM 2)</scope>
    <source>
        <tissue>Kidney</tissue>
    </source>
</reference>
<reference key="2">
    <citation type="journal article" date="2003" name="Mol. Biol. Evol.">
        <title>Gene diversity patterns at 10 X-chromosomal loci in humans and chimpanzees.</title>
        <authorList>
            <person name="Kitano T."/>
            <person name="Schwarz C."/>
            <person name="Nickel B."/>
            <person name="Paeaebo S."/>
        </authorList>
    </citation>
    <scope>NUCLEOTIDE SEQUENCE [MRNA] OF 154-2181 (ISOFORM 1)</scope>
</reference>
<dbReference type="EMBL" id="CR858176">
    <property type="protein sequence ID" value="CAH90415.1"/>
    <property type="status" value="ALT_FRAME"/>
    <property type="molecule type" value="mRNA"/>
</dbReference>
<dbReference type="EMBL" id="AB102670">
    <property type="protein sequence ID" value="BAC81139.1"/>
    <property type="molecule type" value="mRNA"/>
</dbReference>
<dbReference type="RefSeq" id="XP_054326755.1">
    <molecule id="Q5RCU2-2"/>
    <property type="nucleotide sequence ID" value="XM_054470780.2"/>
</dbReference>
<dbReference type="RefSeq" id="XP_054326757.1">
    <molecule id="Q5RCU2-1"/>
    <property type="nucleotide sequence ID" value="XM_054470782.2"/>
</dbReference>
<dbReference type="SMR" id="Q5RCU2"/>
<dbReference type="GeneID" id="129023895"/>
<dbReference type="KEGG" id="pon:100127097"/>
<dbReference type="GO" id="GO:0016592">
    <property type="term" value="C:mediator complex"/>
    <property type="evidence" value="ECO:0007669"/>
    <property type="project" value="InterPro"/>
</dbReference>
<dbReference type="GO" id="GO:0008013">
    <property type="term" value="F:beta-catenin binding"/>
    <property type="evidence" value="ECO:0007669"/>
    <property type="project" value="InterPro"/>
</dbReference>
<dbReference type="GO" id="GO:0003713">
    <property type="term" value="F:transcription coactivator activity"/>
    <property type="evidence" value="ECO:0007669"/>
    <property type="project" value="TreeGrafter"/>
</dbReference>
<dbReference type="GO" id="GO:0045944">
    <property type="term" value="P:positive regulation of transcription by RNA polymerase II"/>
    <property type="evidence" value="ECO:0007669"/>
    <property type="project" value="TreeGrafter"/>
</dbReference>
<dbReference type="InterPro" id="IPR051647">
    <property type="entry name" value="Mediator_comp_sub12"/>
</dbReference>
<dbReference type="InterPro" id="IPR019035">
    <property type="entry name" value="Mediator_Med12"/>
</dbReference>
<dbReference type="InterPro" id="IPR021989">
    <property type="entry name" value="Mediator_Med12_catenin-bd"/>
</dbReference>
<dbReference type="InterPro" id="IPR021990">
    <property type="entry name" value="Mediator_Med12_LCEWAV"/>
</dbReference>
<dbReference type="PANTHER" id="PTHR46007">
    <property type="entry name" value="MEDIATOR OF RNA POLYMERASE II TRANSCRIPTION SUBUNIT 12"/>
    <property type="match status" value="1"/>
</dbReference>
<dbReference type="PANTHER" id="PTHR46007:SF2">
    <property type="entry name" value="MEDIATOR OF RNA POLYMERASE II TRANSCRIPTION SUBUNIT 12"/>
    <property type="match status" value="1"/>
</dbReference>
<dbReference type="Pfam" id="PF09497">
    <property type="entry name" value="Med12"/>
    <property type="match status" value="1"/>
</dbReference>
<dbReference type="Pfam" id="PF12145">
    <property type="entry name" value="Med12-LCEWAV"/>
    <property type="match status" value="1"/>
</dbReference>
<dbReference type="Pfam" id="PF12144">
    <property type="entry name" value="Med12-PQL"/>
    <property type="match status" value="1"/>
</dbReference>
<dbReference type="SMART" id="SM01281">
    <property type="entry name" value="Med12"/>
    <property type="match status" value="1"/>
</dbReference>
<gene>
    <name type="primary">MED12</name>
    <name type="synonym">TNRC11</name>
</gene>
<protein>
    <recommendedName>
        <fullName>Mediator of RNA polymerase II transcription subunit 12</fullName>
    </recommendedName>
    <alternativeName>
        <fullName>Mediator complex subunit 12</fullName>
    </alternativeName>
    <alternativeName>
        <fullName>Trinucleotide repeat-containing gene 11 protein</fullName>
    </alternativeName>
</protein>
<organism>
    <name type="scientific">Pongo pygmaeus</name>
    <name type="common">Bornean orangutan</name>
    <dbReference type="NCBI Taxonomy" id="9600"/>
    <lineage>
        <taxon>Eukaryota</taxon>
        <taxon>Metazoa</taxon>
        <taxon>Chordata</taxon>
        <taxon>Craniata</taxon>
        <taxon>Vertebrata</taxon>
        <taxon>Euteleostomi</taxon>
        <taxon>Mammalia</taxon>
        <taxon>Eutheria</taxon>
        <taxon>Euarchontoglires</taxon>
        <taxon>Primates</taxon>
        <taxon>Haplorrhini</taxon>
        <taxon>Catarrhini</taxon>
        <taxon>Hominidae</taxon>
        <taxon>Pongo</taxon>
    </lineage>
</organism>
<name>MED12_PONPY</name>
<feature type="chain" id="PRO_0000312959" description="Mediator of RNA polymerase II transcription subunit 12">
    <location>
        <begin position="1"/>
        <end position="2181"/>
    </location>
</feature>
<feature type="region of interest" description="Disordered" evidence="4">
    <location>
        <begin position="12"/>
        <end position="35"/>
    </location>
</feature>
<feature type="region of interest" description="Disordered" evidence="4">
    <location>
        <begin position="323"/>
        <end position="344"/>
    </location>
</feature>
<feature type="region of interest" description="Disordered" evidence="4">
    <location>
        <begin position="627"/>
        <end position="669"/>
    </location>
</feature>
<feature type="region of interest" description="Disordered" evidence="4">
    <location>
        <begin position="690"/>
        <end position="717"/>
    </location>
</feature>
<feature type="region of interest" description="Disordered" evidence="4">
    <location>
        <begin position="1241"/>
        <end position="1266"/>
    </location>
</feature>
<feature type="region of interest" description="Disordered" evidence="4">
    <location>
        <begin position="1394"/>
        <end position="1415"/>
    </location>
</feature>
<feature type="region of interest" description="Disordered" evidence="4">
    <location>
        <begin position="1450"/>
        <end position="1474"/>
    </location>
</feature>
<feature type="region of interest" description="Interaction with CTNNB1 and GLI3" evidence="1">
    <location>
        <begin position="1616"/>
        <end position="2054"/>
    </location>
</feature>
<feature type="region of interest" description="Disordered" evidence="4">
    <location>
        <begin position="1738"/>
        <end position="1829"/>
    </location>
</feature>
<feature type="region of interest" description="Disordered" evidence="4">
    <location>
        <begin position="1958"/>
        <end position="2003"/>
    </location>
</feature>
<feature type="region of interest" description="Disordered" evidence="4">
    <location>
        <begin position="2119"/>
        <end position="2153"/>
    </location>
</feature>
<feature type="region of interest" description="Disordered" evidence="4">
    <location>
        <begin position="2162"/>
        <end position="2181"/>
    </location>
</feature>
<feature type="compositionally biased region" description="Basic and acidic residues" evidence="4">
    <location>
        <begin position="702"/>
        <end position="717"/>
    </location>
</feature>
<feature type="compositionally biased region" description="Low complexity" evidence="4">
    <location>
        <begin position="1394"/>
        <end position="1411"/>
    </location>
</feature>
<feature type="compositionally biased region" description="Basic and acidic residues" evidence="4">
    <location>
        <begin position="1450"/>
        <end position="1469"/>
    </location>
</feature>
<feature type="compositionally biased region" description="Basic and acidic residues" evidence="4">
    <location>
        <begin position="1758"/>
        <end position="1771"/>
    </location>
</feature>
<feature type="compositionally biased region" description="Basic residues" evidence="4">
    <location>
        <begin position="1784"/>
        <end position="1793"/>
    </location>
</feature>
<feature type="compositionally biased region" description="Low complexity" evidence="4">
    <location>
        <begin position="1968"/>
        <end position="1983"/>
    </location>
</feature>
<feature type="compositionally biased region" description="Low complexity" evidence="4">
    <location>
        <begin position="2119"/>
        <end position="2129"/>
    </location>
</feature>
<feature type="compositionally biased region" description="Low complexity" evidence="4">
    <location>
        <begin position="2137"/>
        <end position="2153"/>
    </location>
</feature>
<feature type="compositionally biased region" description="Low complexity" evidence="4">
    <location>
        <begin position="2162"/>
        <end position="2175"/>
    </location>
</feature>
<feature type="modified residue" description="N6-acetyllysine" evidence="2">
    <location>
        <position position="80"/>
    </location>
</feature>
<feature type="modified residue" description="Phosphotyrosine" evidence="3">
    <location>
        <position position="166"/>
    </location>
</feature>
<feature type="modified residue" description="Phosphoserine" evidence="3">
    <location>
        <position position="635"/>
    </location>
</feature>
<feature type="modified residue" description="Phosphoserine" evidence="3">
    <location>
        <position position="665"/>
    </location>
</feature>
<feature type="modified residue" description="Phosphoserine" evidence="3">
    <location>
        <position position="698"/>
    </location>
</feature>
<feature type="modified residue" description="Phosphoserine" evidence="3">
    <location>
        <position position="700"/>
    </location>
</feature>
<feature type="modified residue" description="Phosphoserine" evidence="3">
    <location>
        <position position="1258"/>
    </location>
</feature>
<feature type="modified residue" description="Phosphoserine" evidence="3">
    <location>
        <position position="1269"/>
    </location>
</feature>
<feature type="modified residue" description="N6-acetyllysine" evidence="2">
    <location>
        <position position="1798"/>
    </location>
</feature>
<feature type="modified residue" description="Asymmetric dimethylarginine; alternate" evidence="2">
    <location>
        <position position="1899"/>
    </location>
</feature>
<feature type="modified residue" description="Omega-N-methylarginine; alternate" evidence="2">
    <location>
        <position position="1899"/>
    </location>
</feature>
<feature type="modified residue" description="Omega-N-methylarginine" evidence="2">
    <location>
        <position position="1910"/>
    </location>
</feature>
<feature type="modified residue" description="Asymmetric dimethylarginine" evidence="3">
    <location>
        <position position="1997"/>
    </location>
</feature>
<feature type="modified residue" description="Asymmetric dimethylarginine" evidence="3">
    <location>
        <position position="2018"/>
    </location>
</feature>
<feature type="splice variant" id="VSP_029981" description="In isoform 2." evidence="5">
    <location>
        <begin position="1964"/>
        <end position="1988"/>
    </location>
</feature>
<feature type="sequence conflict" description="In Ref. 1; CAH90415." evidence="6" ref="1">
    <original>D</original>
    <variation>G</variation>
    <location>
        <position position="575"/>
    </location>
</feature>
<feature type="sequence conflict" description="In Ref. 1; CAH90415." evidence="6" ref="1">
    <original>D</original>
    <variation>G</variation>
    <location>
        <position position="705"/>
    </location>
</feature>
<feature type="sequence conflict" description="In Ref. 1; CAH90415." evidence="6" ref="1">
    <original>D</original>
    <variation>G</variation>
    <location>
        <position position="1126"/>
    </location>
</feature>
<feature type="sequence conflict" description="In Ref. 1; CAH90415." evidence="6" ref="1">
    <original>M</original>
    <variation>V</variation>
    <location>
        <position position="1614"/>
    </location>
</feature>
<feature type="sequence conflict" description="In Ref. 1; CAH90415." evidence="6" ref="1">
    <original>I</original>
    <variation>V</variation>
    <location>
        <position position="1671"/>
    </location>
</feature>
<feature type="sequence conflict" description="In Ref. 1; CAH90415." evidence="6" ref="1">
    <original>L</original>
    <variation>P</variation>
    <location>
        <position position="1821"/>
    </location>
</feature>
<proteinExistence type="evidence at transcript level"/>